<evidence type="ECO:0000255" key="1">
    <source>
        <dbReference type="HAMAP-Rule" id="MF_00049"/>
    </source>
</evidence>
<name>SYL_SALTO</name>
<organism>
    <name type="scientific">Salinispora tropica (strain ATCC BAA-916 / DSM 44818 / JCM 13857 / NBRC 105044 / CNB-440)</name>
    <dbReference type="NCBI Taxonomy" id="369723"/>
    <lineage>
        <taxon>Bacteria</taxon>
        <taxon>Bacillati</taxon>
        <taxon>Actinomycetota</taxon>
        <taxon>Actinomycetes</taxon>
        <taxon>Micromonosporales</taxon>
        <taxon>Micromonosporaceae</taxon>
        <taxon>Salinispora</taxon>
    </lineage>
</organism>
<sequence length="954" mass="106010">MTEAAAPASDIPPFRYTADLADEIERRWQDTWEREGTFHAPNPTGPLADPEHPRAGAEKLYVLDMFPYPSGAGLHVGHPLGYIGTDCFARYQRMAGRNVLHAMGFDAFGLPAEQYAVQTGTHPRTTTEANIARYKAQLRRLGLAHDERRSVATIDADFYRWTQWVFLQIYNAWYDSSAKRARPIAELVAEFSGGSRRTPDGRPWGELTDAERRAVVDQHRLAYVSQAPVNWCPGLGTVLANEEVTADGRSERGNFPVFKRNLKQWMMRITAYGDRLLDDLEKLDWPEPIKLMQRNWIGRSTGAHIEFPTSAPDSDAEGEPRISVFTTRPDTIFGATYLVLAPEHDLVDTLVPTAWPAGVPQAWTGGQASPREAVAGYRKVAAAKTDLERQAETKEKTGVFIGSYATNPVTGAQIPIFIADYVLAGYGTGAIMAVPGQDERDWAFAEVFDLPIVRTVQPAEGFAGKAYTGDGLAINSATPERGLDLNGLGVAEAKARTIAWLEAGGHGSGAVTYRLRDWLFSRQRYWGEPFPIVYDETGAAIALPEELLPVELPEVDDFAPRTFDPSDAESNPETPLSRRRDWVEVELDLGDGPKRYTRETNVMPQWAGSCWYELRYLDPTNGDRFVDPEAERYWMGPRGEGDCGGTDLYVGGAEHAVLHLLYARFWHKVLYDLGHVSSFEPFRKLFNQGYIQAYAYTDARGAYVPAEEVVERSGTYYLGDVQVNREYGKMGKSLRNVVTPDEMCAAYGADTFRVYEMSMGPLEVSRPWETRAVVGSFRFLQRVWRAIVDERSGASRVVDVPADEATRRLLHRIVDGVRGDMEAMRFNTTIAKLIELTNALTRLPETPREVAEPLVLMLAPFAPHVAEELWRRMGHETSLTYADFPVADPALLVAESVTYPVQVNGKVRGRIEVPADAGQETVRAAALEAVAASLAGKEPRKVIVVPGRMVSVVA</sequence>
<reference key="1">
    <citation type="journal article" date="2007" name="Proc. Natl. Acad. Sci. U.S.A.">
        <title>Genome sequencing reveals complex secondary metabolome in the marine actinomycete Salinispora tropica.</title>
        <authorList>
            <person name="Udwary D.W."/>
            <person name="Zeigler L."/>
            <person name="Asolkar R.N."/>
            <person name="Singan V."/>
            <person name="Lapidus A."/>
            <person name="Fenical W."/>
            <person name="Jensen P.R."/>
            <person name="Moore B.S."/>
        </authorList>
    </citation>
    <scope>NUCLEOTIDE SEQUENCE [LARGE SCALE GENOMIC DNA]</scope>
    <source>
        <strain>ATCC BAA-916 / DSM 44818 / JCM 13857 / NBRC 105044 / CNB-440</strain>
    </source>
</reference>
<gene>
    <name evidence="1" type="primary">leuS</name>
    <name type="ordered locus">Strop_3225</name>
</gene>
<accession>A4X9S8</accession>
<keyword id="KW-0030">Aminoacyl-tRNA synthetase</keyword>
<keyword id="KW-0067">ATP-binding</keyword>
<keyword id="KW-0963">Cytoplasm</keyword>
<keyword id="KW-0436">Ligase</keyword>
<keyword id="KW-0547">Nucleotide-binding</keyword>
<keyword id="KW-0648">Protein biosynthesis</keyword>
<keyword id="KW-1185">Reference proteome</keyword>
<proteinExistence type="inferred from homology"/>
<dbReference type="EC" id="6.1.1.4" evidence="1"/>
<dbReference type="EMBL" id="CP000667">
    <property type="protein sequence ID" value="ABP55659.1"/>
    <property type="molecule type" value="Genomic_DNA"/>
</dbReference>
<dbReference type="RefSeq" id="WP_012014436.1">
    <property type="nucleotide sequence ID" value="NC_009380.1"/>
</dbReference>
<dbReference type="SMR" id="A4X9S8"/>
<dbReference type="STRING" id="369723.Strop_3225"/>
<dbReference type="KEGG" id="stp:Strop_3225"/>
<dbReference type="PATRIC" id="fig|369723.5.peg.3317"/>
<dbReference type="eggNOG" id="COG0495">
    <property type="taxonomic scope" value="Bacteria"/>
</dbReference>
<dbReference type="HOGENOM" id="CLU_004427_0_0_11"/>
<dbReference type="Proteomes" id="UP000000235">
    <property type="component" value="Chromosome"/>
</dbReference>
<dbReference type="GO" id="GO:0005829">
    <property type="term" value="C:cytosol"/>
    <property type="evidence" value="ECO:0007669"/>
    <property type="project" value="TreeGrafter"/>
</dbReference>
<dbReference type="GO" id="GO:0002161">
    <property type="term" value="F:aminoacyl-tRNA deacylase activity"/>
    <property type="evidence" value="ECO:0007669"/>
    <property type="project" value="InterPro"/>
</dbReference>
<dbReference type="GO" id="GO:0005524">
    <property type="term" value="F:ATP binding"/>
    <property type="evidence" value="ECO:0007669"/>
    <property type="project" value="UniProtKB-UniRule"/>
</dbReference>
<dbReference type="GO" id="GO:0004823">
    <property type="term" value="F:leucine-tRNA ligase activity"/>
    <property type="evidence" value="ECO:0007669"/>
    <property type="project" value="UniProtKB-UniRule"/>
</dbReference>
<dbReference type="GO" id="GO:0006429">
    <property type="term" value="P:leucyl-tRNA aminoacylation"/>
    <property type="evidence" value="ECO:0007669"/>
    <property type="project" value="UniProtKB-UniRule"/>
</dbReference>
<dbReference type="CDD" id="cd07958">
    <property type="entry name" value="Anticodon_Ia_Leu_BEm"/>
    <property type="match status" value="1"/>
</dbReference>
<dbReference type="FunFam" id="3.40.50.620:FF:000056">
    <property type="entry name" value="Leucine--tRNA ligase"/>
    <property type="match status" value="1"/>
</dbReference>
<dbReference type="FunFam" id="3.40.50.620:FF:000060">
    <property type="entry name" value="Leucine--tRNA ligase"/>
    <property type="match status" value="1"/>
</dbReference>
<dbReference type="FunFam" id="3.40.50.620:FF:000087">
    <property type="entry name" value="Leucine--tRNA ligase"/>
    <property type="match status" value="1"/>
</dbReference>
<dbReference type="FunFam" id="3.90.740.10:FF:000017">
    <property type="entry name" value="Leucine--tRNA ligase"/>
    <property type="match status" value="1"/>
</dbReference>
<dbReference type="FunFam" id="1.10.730.10:FF:000011">
    <property type="entry name" value="Leucine--tRNA ligase chloroplastic/mitochondrial"/>
    <property type="match status" value="1"/>
</dbReference>
<dbReference type="Gene3D" id="3.40.50.620">
    <property type="entry name" value="HUPs"/>
    <property type="match status" value="3"/>
</dbReference>
<dbReference type="Gene3D" id="1.10.730.10">
    <property type="entry name" value="Isoleucyl-tRNA Synthetase, Domain 1"/>
    <property type="match status" value="1"/>
</dbReference>
<dbReference type="Gene3D" id="3.90.740.10">
    <property type="entry name" value="Valyl/Leucyl/Isoleucyl-tRNA synthetase, editing domain"/>
    <property type="match status" value="1"/>
</dbReference>
<dbReference type="HAMAP" id="MF_00049_B">
    <property type="entry name" value="Leu_tRNA_synth_B"/>
    <property type="match status" value="1"/>
</dbReference>
<dbReference type="InterPro" id="IPR001412">
    <property type="entry name" value="aa-tRNA-synth_I_CS"/>
</dbReference>
<dbReference type="InterPro" id="IPR002302">
    <property type="entry name" value="Leu-tRNA-ligase"/>
</dbReference>
<dbReference type="InterPro" id="IPR025709">
    <property type="entry name" value="Leu_tRNA-synth_edit"/>
</dbReference>
<dbReference type="InterPro" id="IPR013155">
    <property type="entry name" value="M/V/L/I-tRNA-synth_anticd-bd"/>
</dbReference>
<dbReference type="InterPro" id="IPR015413">
    <property type="entry name" value="Methionyl/Leucyl_tRNA_Synth"/>
</dbReference>
<dbReference type="InterPro" id="IPR014729">
    <property type="entry name" value="Rossmann-like_a/b/a_fold"/>
</dbReference>
<dbReference type="InterPro" id="IPR009080">
    <property type="entry name" value="tRNAsynth_Ia_anticodon-bd"/>
</dbReference>
<dbReference type="InterPro" id="IPR009008">
    <property type="entry name" value="Val/Leu/Ile-tRNA-synth_edit"/>
</dbReference>
<dbReference type="NCBIfam" id="TIGR00396">
    <property type="entry name" value="leuS_bact"/>
    <property type="match status" value="1"/>
</dbReference>
<dbReference type="PANTHER" id="PTHR43740:SF2">
    <property type="entry name" value="LEUCINE--TRNA LIGASE, MITOCHONDRIAL"/>
    <property type="match status" value="1"/>
</dbReference>
<dbReference type="PANTHER" id="PTHR43740">
    <property type="entry name" value="LEUCYL-TRNA SYNTHETASE"/>
    <property type="match status" value="1"/>
</dbReference>
<dbReference type="Pfam" id="PF08264">
    <property type="entry name" value="Anticodon_1"/>
    <property type="match status" value="1"/>
</dbReference>
<dbReference type="Pfam" id="PF13603">
    <property type="entry name" value="tRNA-synt_1_2"/>
    <property type="match status" value="1"/>
</dbReference>
<dbReference type="Pfam" id="PF09334">
    <property type="entry name" value="tRNA-synt_1g"/>
    <property type="match status" value="1"/>
</dbReference>
<dbReference type="PRINTS" id="PR00985">
    <property type="entry name" value="TRNASYNTHLEU"/>
</dbReference>
<dbReference type="SUPFAM" id="SSF47323">
    <property type="entry name" value="Anticodon-binding domain of a subclass of class I aminoacyl-tRNA synthetases"/>
    <property type="match status" value="1"/>
</dbReference>
<dbReference type="SUPFAM" id="SSF52374">
    <property type="entry name" value="Nucleotidylyl transferase"/>
    <property type="match status" value="1"/>
</dbReference>
<dbReference type="SUPFAM" id="SSF50677">
    <property type="entry name" value="ValRS/IleRS/LeuRS editing domain"/>
    <property type="match status" value="1"/>
</dbReference>
<dbReference type="PROSITE" id="PS00178">
    <property type="entry name" value="AA_TRNA_LIGASE_I"/>
    <property type="match status" value="1"/>
</dbReference>
<comment type="catalytic activity">
    <reaction evidence="1">
        <text>tRNA(Leu) + L-leucine + ATP = L-leucyl-tRNA(Leu) + AMP + diphosphate</text>
        <dbReference type="Rhea" id="RHEA:11688"/>
        <dbReference type="Rhea" id="RHEA-COMP:9613"/>
        <dbReference type="Rhea" id="RHEA-COMP:9622"/>
        <dbReference type="ChEBI" id="CHEBI:30616"/>
        <dbReference type="ChEBI" id="CHEBI:33019"/>
        <dbReference type="ChEBI" id="CHEBI:57427"/>
        <dbReference type="ChEBI" id="CHEBI:78442"/>
        <dbReference type="ChEBI" id="CHEBI:78494"/>
        <dbReference type="ChEBI" id="CHEBI:456215"/>
        <dbReference type="EC" id="6.1.1.4"/>
    </reaction>
</comment>
<comment type="subcellular location">
    <subcellularLocation>
        <location evidence="1">Cytoplasm</location>
    </subcellularLocation>
</comment>
<comment type="similarity">
    <text evidence="1">Belongs to the class-I aminoacyl-tRNA synthetase family.</text>
</comment>
<protein>
    <recommendedName>
        <fullName evidence="1">Leucine--tRNA ligase</fullName>
        <ecNumber evidence="1">6.1.1.4</ecNumber>
    </recommendedName>
    <alternativeName>
        <fullName evidence="1">Leucyl-tRNA synthetase</fullName>
        <shortName evidence="1">LeuRS</shortName>
    </alternativeName>
</protein>
<feature type="chain" id="PRO_1000091362" description="Leucine--tRNA ligase">
    <location>
        <begin position="1"/>
        <end position="954"/>
    </location>
</feature>
<feature type="short sequence motif" description="'HIGH' region">
    <location>
        <begin position="67"/>
        <end position="78"/>
    </location>
</feature>
<feature type="short sequence motif" description="'KMSKS' region">
    <location>
        <begin position="729"/>
        <end position="733"/>
    </location>
</feature>
<feature type="binding site" evidence="1">
    <location>
        <position position="732"/>
    </location>
    <ligand>
        <name>ATP</name>
        <dbReference type="ChEBI" id="CHEBI:30616"/>
    </ligand>
</feature>